<evidence type="ECO:0000255" key="1">
    <source>
        <dbReference type="HAMAP-Rule" id="MF_00135"/>
    </source>
</evidence>
<dbReference type="EC" id="5.3.1.24" evidence="1"/>
<dbReference type="EMBL" id="AE015929">
    <property type="protein sequence ID" value="AAO04649.1"/>
    <property type="molecule type" value="Genomic_DNA"/>
</dbReference>
<dbReference type="RefSeq" id="NP_764607.1">
    <property type="nucleotide sequence ID" value="NC_004461.1"/>
</dbReference>
<dbReference type="RefSeq" id="WP_001832767.1">
    <property type="nucleotide sequence ID" value="NZ_WBME01000002.1"/>
</dbReference>
<dbReference type="SMR" id="Q8CSN5"/>
<dbReference type="KEGG" id="sep:SE_1052"/>
<dbReference type="PATRIC" id="fig|176280.10.peg.1028"/>
<dbReference type="eggNOG" id="COG0135">
    <property type="taxonomic scope" value="Bacteria"/>
</dbReference>
<dbReference type="HOGENOM" id="CLU_076364_1_2_9"/>
<dbReference type="OrthoDB" id="9786954at2"/>
<dbReference type="UniPathway" id="UPA00035">
    <property type="reaction ID" value="UER00042"/>
</dbReference>
<dbReference type="Proteomes" id="UP000001411">
    <property type="component" value="Chromosome"/>
</dbReference>
<dbReference type="GO" id="GO:0004640">
    <property type="term" value="F:phosphoribosylanthranilate isomerase activity"/>
    <property type="evidence" value="ECO:0007669"/>
    <property type="project" value="UniProtKB-UniRule"/>
</dbReference>
<dbReference type="GO" id="GO:0000162">
    <property type="term" value="P:L-tryptophan biosynthetic process"/>
    <property type="evidence" value="ECO:0007669"/>
    <property type="project" value="UniProtKB-UniRule"/>
</dbReference>
<dbReference type="CDD" id="cd00405">
    <property type="entry name" value="PRAI"/>
    <property type="match status" value="1"/>
</dbReference>
<dbReference type="Gene3D" id="3.20.20.70">
    <property type="entry name" value="Aldolase class I"/>
    <property type="match status" value="1"/>
</dbReference>
<dbReference type="HAMAP" id="MF_00135">
    <property type="entry name" value="PRAI"/>
    <property type="match status" value="1"/>
</dbReference>
<dbReference type="InterPro" id="IPR013785">
    <property type="entry name" value="Aldolase_TIM"/>
</dbReference>
<dbReference type="InterPro" id="IPR001240">
    <property type="entry name" value="PRAI_dom"/>
</dbReference>
<dbReference type="InterPro" id="IPR011060">
    <property type="entry name" value="RibuloseP-bd_barrel"/>
</dbReference>
<dbReference type="InterPro" id="IPR044643">
    <property type="entry name" value="TrpF_fam"/>
</dbReference>
<dbReference type="NCBIfam" id="NF010563">
    <property type="entry name" value="PRK13958.1"/>
    <property type="match status" value="1"/>
</dbReference>
<dbReference type="PANTHER" id="PTHR42894">
    <property type="entry name" value="N-(5'-PHOSPHORIBOSYL)ANTHRANILATE ISOMERASE"/>
    <property type="match status" value="1"/>
</dbReference>
<dbReference type="PANTHER" id="PTHR42894:SF1">
    <property type="entry name" value="N-(5'-PHOSPHORIBOSYL)ANTHRANILATE ISOMERASE"/>
    <property type="match status" value="1"/>
</dbReference>
<dbReference type="Pfam" id="PF00697">
    <property type="entry name" value="PRAI"/>
    <property type="match status" value="1"/>
</dbReference>
<dbReference type="SUPFAM" id="SSF51366">
    <property type="entry name" value="Ribulose-phoshate binding barrel"/>
    <property type="match status" value="1"/>
</dbReference>
<proteinExistence type="inferred from homology"/>
<comment type="catalytic activity">
    <reaction evidence="1">
        <text>N-(5-phospho-beta-D-ribosyl)anthranilate = 1-(2-carboxyphenylamino)-1-deoxy-D-ribulose 5-phosphate</text>
        <dbReference type="Rhea" id="RHEA:21540"/>
        <dbReference type="ChEBI" id="CHEBI:18277"/>
        <dbReference type="ChEBI" id="CHEBI:58613"/>
        <dbReference type="EC" id="5.3.1.24"/>
    </reaction>
</comment>
<comment type="pathway">
    <text evidence="1">Amino-acid biosynthesis; L-tryptophan biosynthesis; L-tryptophan from chorismate: step 3/5.</text>
</comment>
<comment type="similarity">
    <text evidence="1">Belongs to the TrpF family.</text>
</comment>
<organism>
    <name type="scientific">Staphylococcus epidermidis (strain ATCC 12228 / FDA PCI 1200)</name>
    <dbReference type="NCBI Taxonomy" id="176280"/>
    <lineage>
        <taxon>Bacteria</taxon>
        <taxon>Bacillati</taxon>
        <taxon>Bacillota</taxon>
        <taxon>Bacilli</taxon>
        <taxon>Bacillales</taxon>
        <taxon>Staphylococcaceae</taxon>
        <taxon>Staphylococcus</taxon>
    </lineage>
</organism>
<accession>Q8CSN5</accession>
<name>TRPF_STAES</name>
<reference key="1">
    <citation type="journal article" date="2003" name="Mol. Microbiol.">
        <title>Genome-based analysis of virulence genes in a non-biofilm-forming Staphylococcus epidermidis strain (ATCC 12228).</title>
        <authorList>
            <person name="Zhang Y.-Q."/>
            <person name="Ren S.-X."/>
            <person name="Li H.-L."/>
            <person name="Wang Y.-X."/>
            <person name="Fu G."/>
            <person name="Yang J."/>
            <person name="Qin Z.-Q."/>
            <person name="Miao Y.-G."/>
            <person name="Wang W.-Y."/>
            <person name="Chen R.-S."/>
            <person name="Shen Y."/>
            <person name="Chen Z."/>
            <person name="Yuan Z.-H."/>
            <person name="Zhao G.-P."/>
            <person name="Qu D."/>
            <person name="Danchin A."/>
            <person name="Wen Y.-M."/>
        </authorList>
    </citation>
    <scope>NUCLEOTIDE SEQUENCE [LARGE SCALE GENOMIC DNA]</scope>
    <source>
        <strain>ATCC 12228 / FDA PCI 1200</strain>
    </source>
</reference>
<keyword id="KW-0028">Amino-acid biosynthesis</keyword>
<keyword id="KW-0057">Aromatic amino acid biosynthesis</keyword>
<keyword id="KW-0413">Isomerase</keyword>
<keyword id="KW-0822">Tryptophan biosynthesis</keyword>
<sequence length="207" mass="23785">MIVKFCGFKTESDIKKIKKLEVDAVGFIHYPDSKRHVSLKQLKYLAKIVPDHIEKVVVVVNPQMSTIKRIINQTDINTIQLHGNESIQLIRNIKKLNSKIRIIKAIPATRNLNNNIQKYKDEIDMFIIDTPSITYGGTGQSFDWKLLKKIKGVDFLIAGGLDFEKIKRLEIYSFGQCGYDISTGIESHNEKDFNKMTRILKFLKGDE</sequence>
<protein>
    <recommendedName>
        <fullName evidence="1">N-(5'-phosphoribosyl)anthranilate isomerase</fullName>
        <shortName evidence="1">PRAI</shortName>
        <ecNumber evidence="1">5.3.1.24</ecNumber>
    </recommendedName>
</protein>
<feature type="chain" id="PRO_0000154382" description="N-(5'-phosphoribosyl)anthranilate isomerase">
    <location>
        <begin position="1"/>
        <end position="207"/>
    </location>
</feature>
<gene>
    <name evidence="1" type="primary">trpF</name>
    <name type="ordered locus">SE_1052</name>
</gene>